<sequence length="382" mass="43088">MLRWTVHLEGGPRRVNHAAVAVGHRVYSFGGYCSGEDYETLRQIDVHIFNAVSLRWTKLPPVKSAIRGQAPVVPYMRYGHSTVLIDDTVLLWGGRNDTEGACNVLYAFDVNTHKWFTPRVSGTVPGARDGHSACVLGKIMYIFGGYEQQADCFSNDIHKLDTSTMTWTLICTKGSPARWRDFHSATMLGSHMYVFGGRADRFGPFHSNNEIYCNRIRVFDTRTEAWLDCPPTPVLPEGRRSHSAFGYNGELYIFGGYNARLNRHFHDLWKFNPVSFTWKKIEPKGKGPCPRRRQCCCIVGDKIVLFGGTSPSPEEGLGDEFDLIDHSDLHILDFSPSLKTLCKLAVIQYNLDQSCLPHDIRWELNAMTTNSNISRPIVSSHG</sequence>
<accession>Q9BQ90</accession>
<accession>A8K2W9</accession>
<gene>
    <name evidence="7 9" type="primary">KLHDC3</name>
    <name evidence="6" type="synonym">PEAS</name>
</gene>
<organism>
    <name type="scientific">Homo sapiens</name>
    <name type="common">Human</name>
    <dbReference type="NCBI Taxonomy" id="9606"/>
    <lineage>
        <taxon>Eukaryota</taxon>
        <taxon>Metazoa</taxon>
        <taxon>Chordata</taxon>
        <taxon>Craniata</taxon>
        <taxon>Vertebrata</taxon>
        <taxon>Euteleostomi</taxon>
        <taxon>Mammalia</taxon>
        <taxon>Eutheria</taxon>
        <taxon>Euarchontoglires</taxon>
        <taxon>Primates</taxon>
        <taxon>Haplorrhini</taxon>
        <taxon>Catarrhini</taxon>
        <taxon>Hominidae</taxon>
        <taxon>Homo</taxon>
    </lineage>
</organism>
<dbReference type="EMBL" id="AB055925">
    <property type="protein sequence ID" value="BAB63257.1"/>
    <property type="molecule type" value="mRNA"/>
</dbReference>
<dbReference type="EMBL" id="AK290384">
    <property type="protein sequence ID" value="BAF83073.1"/>
    <property type="molecule type" value="mRNA"/>
</dbReference>
<dbReference type="EMBL" id="AL136304">
    <property type="status" value="NOT_ANNOTATED_CDS"/>
    <property type="molecule type" value="Genomic_DNA"/>
</dbReference>
<dbReference type="EMBL" id="CH471081">
    <property type="protein sequence ID" value="EAX04136.1"/>
    <property type="molecule type" value="Genomic_DNA"/>
</dbReference>
<dbReference type="EMBL" id="BC000295">
    <property type="protein sequence ID" value="AAH00295.1"/>
    <property type="molecule type" value="mRNA"/>
</dbReference>
<dbReference type="EMBL" id="BC001789">
    <property type="protein sequence ID" value="AAH01789.1"/>
    <property type="molecule type" value="mRNA"/>
</dbReference>
<dbReference type="EMBL" id="BC001793">
    <property type="protein sequence ID" value="AAH01793.1"/>
    <property type="molecule type" value="mRNA"/>
</dbReference>
<dbReference type="EMBL" id="BC007296">
    <property type="protein sequence ID" value="AAH07296.1"/>
    <property type="molecule type" value="mRNA"/>
</dbReference>
<dbReference type="EMBL" id="BC021546">
    <property type="protein sequence ID" value="AAH21546.1"/>
    <property type="molecule type" value="mRNA"/>
</dbReference>
<dbReference type="CCDS" id="CCDS4880.1"/>
<dbReference type="RefSeq" id="NP_476502.1">
    <property type="nucleotide sequence ID" value="NM_057161.4"/>
</dbReference>
<dbReference type="RefSeq" id="XP_047274119.1">
    <property type="nucleotide sequence ID" value="XM_047418163.1"/>
</dbReference>
<dbReference type="RefSeq" id="XP_047274120.1">
    <property type="nucleotide sequence ID" value="XM_047418164.1"/>
</dbReference>
<dbReference type="RefSeq" id="XP_054210163.1">
    <property type="nucleotide sequence ID" value="XM_054354188.1"/>
</dbReference>
<dbReference type="RefSeq" id="XP_054210164.1">
    <property type="nucleotide sequence ID" value="XM_054354189.1"/>
</dbReference>
<dbReference type="PDB" id="9D1I">
    <property type="method" value="X-ray"/>
    <property type="resolution" value="2.00 A"/>
    <property type="chains" value="A=1-382"/>
</dbReference>
<dbReference type="PDB" id="9D1Y">
    <property type="method" value="X-ray"/>
    <property type="resolution" value="2.60 A"/>
    <property type="chains" value="A=1-382"/>
</dbReference>
<dbReference type="PDB" id="9D1Z">
    <property type="method" value="X-ray"/>
    <property type="resolution" value="1.88 A"/>
    <property type="chains" value="A=1-382"/>
</dbReference>
<dbReference type="PDBsum" id="9D1I"/>
<dbReference type="PDBsum" id="9D1Y"/>
<dbReference type="PDBsum" id="9D1Z"/>
<dbReference type="SMR" id="Q9BQ90"/>
<dbReference type="BioGRID" id="125478">
    <property type="interactions" value="90"/>
</dbReference>
<dbReference type="ComplexPortal" id="CPX-2228">
    <property type="entry name" value="KLHDC3-Elongin C-Elongin B E3 ubiquitin ligase complex"/>
</dbReference>
<dbReference type="FunCoup" id="Q9BQ90">
    <property type="interactions" value="1919"/>
</dbReference>
<dbReference type="IntAct" id="Q9BQ90">
    <property type="interactions" value="74"/>
</dbReference>
<dbReference type="STRING" id="9606.ENSP00000313995"/>
<dbReference type="GlyGen" id="Q9BQ90">
    <property type="glycosylation" value="1 site, 1 N-linked glycan (1 site)"/>
</dbReference>
<dbReference type="iPTMnet" id="Q9BQ90"/>
<dbReference type="PhosphoSitePlus" id="Q9BQ90"/>
<dbReference type="BioMuta" id="KLHDC3"/>
<dbReference type="DMDM" id="74752233"/>
<dbReference type="jPOST" id="Q9BQ90"/>
<dbReference type="MassIVE" id="Q9BQ90"/>
<dbReference type="PaxDb" id="9606-ENSP00000313995"/>
<dbReference type="PeptideAtlas" id="Q9BQ90"/>
<dbReference type="ProteomicsDB" id="78644"/>
<dbReference type="Pumba" id="Q9BQ90"/>
<dbReference type="Antibodypedia" id="30235">
    <property type="antibodies" value="60 antibodies from 19 providers"/>
</dbReference>
<dbReference type="DNASU" id="116138"/>
<dbReference type="Ensembl" id="ENST00000326974.9">
    <property type="protein sequence ID" value="ENSP00000313995.4"/>
    <property type="gene ID" value="ENSG00000124702.19"/>
</dbReference>
<dbReference type="GeneID" id="116138"/>
<dbReference type="KEGG" id="hsa:116138"/>
<dbReference type="MANE-Select" id="ENST00000326974.9">
    <property type="protein sequence ID" value="ENSP00000313995.4"/>
    <property type="RefSeq nucleotide sequence ID" value="NM_057161.4"/>
    <property type="RefSeq protein sequence ID" value="NP_476502.1"/>
</dbReference>
<dbReference type="UCSC" id="uc003otl.4">
    <property type="organism name" value="human"/>
</dbReference>
<dbReference type="AGR" id="HGNC:20704"/>
<dbReference type="CTD" id="116138"/>
<dbReference type="DisGeNET" id="116138"/>
<dbReference type="GeneCards" id="KLHDC3"/>
<dbReference type="HGNC" id="HGNC:20704">
    <property type="gene designation" value="KLHDC3"/>
</dbReference>
<dbReference type="HPA" id="ENSG00000124702">
    <property type="expression patterns" value="Tissue enhanced (skeletal)"/>
</dbReference>
<dbReference type="MIM" id="611248">
    <property type="type" value="gene"/>
</dbReference>
<dbReference type="neXtProt" id="NX_Q9BQ90"/>
<dbReference type="OpenTargets" id="ENSG00000124702"/>
<dbReference type="PharmGKB" id="PA134892782"/>
<dbReference type="VEuPathDB" id="HostDB:ENSG00000124702"/>
<dbReference type="eggNOG" id="KOG4693">
    <property type="taxonomic scope" value="Eukaryota"/>
</dbReference>
<dbReference type="GeneTree" id="ENSGT00940000157952"/>
<dbReference type="HOGENOM" id="CLU_045453_0_0_1"/>
<dbReference type="InParanoid" id="Q9BQ90"/>
<dbReference type="OMA" id="SQETYVF"/>
<dbReference type="OrthoDB" id="432528at2759"/>
<dbReference type="PAN-GO" id="Q9BQ90">
    <property type="GO annotations" value="2 GO annotations based on evolutionary models"/>
</dbReference>
<dbReference type="PhylomeDB" id="Q9BQ90"/>
<dbReference type="TreeFam" id="TF354289"/>
<dbReference type="PathwayCommons" id="Q9BQ90"/>
<dbReference type="Reactome" id="R-HSA-381038">
    <property type="pathway name" value="XBP1(S) activates chaperone genes"/>
</dbReference>
<dbReference type="SignaLink" id="Q9BQ90"/>
<dbReference type="UniPathway" id="UPA00143"/>
<dbReference type="BioGRID-ORCS" id="116138">
    <property type="hits" value="38 hits in 1158 CRISPR screens"/>
</dbReference>
<dbReference type="ChiTaRS" id="KLHDC3">
    <property type="organism name" value="human"/>
</dbReference>
<dbReference type="GeneWiki" id="KLHDC3"/>
<dbReference type="GenomeRNAi" id="116138"/>
<dbReference type="Pharos" id="Q9BQ90">
    <property type="development level" value="Tbio"/>
</dbReference>
<dbReference type="PRO" id="PR:Q9BQ90"/>
<dbReference type="Proteomes" id="UP000005640">
    <property type="component" value="Chromosome 6"/>
</dbReference>
<dbReference type="RNAct" id="Q9BQ90">
    <property type="molecule type" value="protein"/>
</dbReference>
<dbReference type="Bgee" id="ENSG00000124702">
    <property type="expression patterns" value="Expressed in right testis and 208 other cell types or tissues"/>
</dbReference>
<dbReference type="ExpressionAtlas" id="Q9BQ90">
    <property type="expression patterns" value="baseline and differential"/>
</dbReference>
<dbReference type="GO" id="GO:0000785">
    <property type="term" value="C:chromatin"/>
    <property type="evidence" value="ECO:0000314"/>
    <property type="project" value="UniProtKB"/>
</dbReference>
<dbReference type="GO" id="GO:0031462">
    <property type="term" value="C:Cul2-RING ubiquitin ligase complex"/>
    <property type="evidence" value="ECO:0000314"/>
    <property type="project" value="UniProtKB"/>
</dbReference>
<dbReference type="GO" id="GO:0005737">
    <property type="term" value="C:cytoplasm"/>
    <property type="evidence" value="ECO:0000314"/>
    <property type="project" value="UniProtKB"/>
</dbReference>
<dbReference type="GO" id="GO:0005829">
    <property type="term" value="C:cytosol"/>
    <property type="evidence" value="ECO:0000304"/>
    <property type="project" value="Reactome"/>
</dbReference>
<dbReference type="GO" id="GO:0005654">
    <property type="term" value="C:nucleoplasm"/>
    <property type="evidence" value="ECO:0000314"/>
    <property type="project" value="HPA"/>
</dbReference>
<dbReference type="GO" id="GO:0003682">
    <property type="term" value="F:chromatin binding"/>
    <property type="evidence" value="ECO:0000314"/>
    <property type="project" value="UniProtKB"/>
</dbReference>
<dbReference type="GO" id="GO:1990756">
    <property type="term" value="F:ubiquitin-like ligase-substrate adaptor activity"/>
    <property type="evidence" value="ECO:0000314"/>
    <property type="project" value="UniProtKB"/>
</dbReference>
<dbReference type="GO" id="GO:0043161">
    <property type="term" value="P:proteasome-mediated ubiquitin-dependent protein catabolic process"/>
    <property type="evidence" value="ECO:0000314"/>
    <property type="project" value="UniProtKB"/>
</dbReference>
<dbReference type="GO" id="GO:0016567">
    <property type="term" value="P:protein ubiquitination"/>
    <property type="evidence" value="ECO:0007669"/>
    <property type="project" value="UniProtKB-UniPathway"/>
</dbReference>
<dbReference type="GO" id="GO:0007131">
    <property type="term" value="P:reciprocal meiotic recombination"/>
    <property type="evidence" value="ECO:0000303"/>
    <property type="project" value="UniProtKB"/>
</dbReference>
<dbReference type="GO" id="GO:0140627">
    <property type="term" value="P:ubiquitin-dependent protein catabolic process via the C-end degron rule pathway"/>
    <property type="evidence" value="ECO:0000314"/>
    <property type="project" value="UniProtKB"/>
</dbReference>
<dbReference type="FunFam" id="2.120.10.80:FF:000074">
    <property type="entry name" value="Kelch domain containing 3"/>
    <property type="match status" value="1"/>
</dbReference>
<dbReference type="FunFam" id="2.120.10.80:FF:000136">
    <property type="entry name" value="Kelch domain containing 3"/>
    <property type="match status" value="1"/>
</dbReference>
<dbReference type="Gene3D" id="2.120.10.80">
    <property type="entry name" value="Kelch-type beta propeller"/>
    <property type="match status" value="2"/>
</dbReference>
<dbReference type="InterPro" id="IPR015915">
    <property type="entry name" value="Kelch-typ_b-propeller"/>
</dbReference>
<dbReference type="InterPro" id="IPR052637">
    <property type="entry name" value="KLHDC3-like"/>
</dbReference>
<dbReference type="PANTHER" id="PTHR46461">
    <property type="entry name" value="KELCH DOMAIN-CONTAINING PROTEIN 3"/>
    <property type="match status" value="1"/>
</dbReference>
<dbReference type="PANTHER" id="PTHR46461:SF1">
    <property type="entry name" value="KELCH DOMAIN-CONTAINING PROTEIN 3"/>
    <property type="match status" value="1"/>
</dbReference>
<dbReference type="Pfam" id="PF13964">
    <property type="entry name" value="Kelch_6"/>
    <property type="match status" value="1"/>
</dbReference>
<dbReference type="Pfam" id="PF24681">
    <property type="entry name" value="Kelch_KLHDC2_KLHL20_DRC7"/>
    <property type="match status" value="1"/>
</dbReference>
<dbReference type="SUPFAM" id="SSF117281">
    <property type="entry name" value="Kelch motif"/>
    <property type="match status" value="2"/>
</dbReference>
<keyword id="KW-0002">3D-structure</keyword>
<keyword id="KW-0963">Cytoplasm</keyword>
<keyword id="KW-0880">Kelch repeat</keyword>
<keyword id="KW-0469">Meiosis</keyword>
<keyword id="KW-1267">Proteomics identification</keyword>
<keyword id="KW-1185">Reference proteome</keyword>
<keyword id="KW-0677">Repeat</keyword>
<keyword id="KW-0833">Ubl conjugation pathway</keyword>
<feature type="chain" id="PRO_0000228995" description="Kelch domain-containing protein 3">
    <location>
        <begin position="1"/>
        <end position="382"/>
    </location>
</feature>
<feature type="repeat" description="Kelch 1">
    <location>
        <begin position="25"/>
        <end position="77"/>
    </location>
</feature>
<feature type="repeat" description="Kelch 2">
    <location>
        <begin position="88"/>
        <end position="138"/>
    </location>
</feature>
<feature type="repeat" description="Kelch 3">
    <location>
        <begin position="139"/>
        <end position="189"/>
    </location>
</feature>
<feature type="repeat" description="Kelch 4">
    <location>
        <begin position="191"/>
        <end position="249"/>
    </location>
</feature>
<feature type="repeat" description="Kelch 5">
    <location>
        <begin position="251"/>
        <end position="301"/>
    </location>
</feature>
<feature type="strand" evidence="11">
    <location>
        <begin position="3"/>
        <end position="8"/>
    </location>
</feature>
<feature type="strand" evidence="11">
    <location>
        <begin position="18"/>
        <end position="22"/>
    </location>
</feature>
<feature type="strand" evidence="11">
    <location>
        <begin position="25"/>
        <end position="29"/>
    </location>
</feature>
<feature type="strand" evidence="10">
    <location>
        <begin position="38"/>
        <end position="40"/>
    </location>
</feature>
<feature type="strand" evidence="11">
    <location>
        <begin position="46"/>
        <end position="50"/>
    </location>
</feature>
<feature type="turn" evidence="11">
    <location>
        <begin position="51"/>
        <end position="54"/>
    </location>
</feature>
<feature type="strand" evidence="11">
    <location>
        <begin position="55"/>
        <end position="58"/>
    </location>
</feature>
<feature type="strand" evidence="11">
    <location>
        <begin position="81"/>
        <end position="85"/>
    </location>
</feature>
<feature type="strand" evidence="11">
    <location>
        <begin position="88"/>
        <end position="92"/>
    </location>
</feature>
<feature type="strand" evidence="11">
    <location>
        <begin position="97"/>
        <end position="99"/>
    </location>
</feature>
<feature type="strand" evidence="11">
    <location>
        <begin position="106"/>
        <end position="109"/>
    </location>
</feature>
<feature type="turn" evidence="11">
    <location>
        <begin position="110"/>
        <end position="112"/>
    </location>
</feature>
<feature type="strand" evidence="11">
    <location>
        <begin position="128"/>
        <end position="130"/>
    </location>
</feature>
<feature type="strand" evidence="11">
    <location>
        <begin position="132"/>
        <end position="136"/>
    </location>
</feature>
<feature type="strand" evidence="11">
    <location>
        <begin position="139"/>
        <end position="143"/>
    </location>
</feature>
<feature type="turn" evidence="11">
    <location>
        <begin position="148"/>
        <end position="151"/>
    </location>
</feature>
<feature type="strand" evidence="11">
    <location>
        <begin position="157"/>
        <end position="161"/>
    </location>
</feature>
<feature type="turn" evidence="11">
    <location>
        <begin position="162"/>
        <end position="165"/>
    </location>
</feature>
<feature type="strand" evidence="11">
    <location>
        <begin position="166"/>
        <end position="169"/>
    </location>
</feature>
<feature type="strand" evidence="11">
    <location>
        <begin position="180"/>
        <end position="182"/>
    </location>
</feature>
<feature type="strand" evidence="11">
    <location>
        <begin position="184"/>
        <end position="188"/>
    </location>
</feature>
<feature type="strand" evidence="11">
    <location>
        <begin position="191"/>
        <end position="195"/>
    </location>
</feature>
<feature type="strand" evidence="11">
    <location>
        <begin position="198"/>
        <end position="205"/>
    </location>
</feature>
<feature type="strand" evidence="11">
    <location>
        <begin position="210"/>
        <end position="212"/>
    </location>
</feature>
<feature type="strand" evidence="11">
    <location>
        <begin position="217"/>
        <end position="220"/>
    </location>
</feature>
<feature type="turn" evidence="11">
    <location>
        <begin position="221"/>
        <end position="224"/>
    </location>
</feature>
<feature type="strand" evidence="11">
    <location>
        <begin position="243"/>
        <end position="247"/>
    </location>
</feature>
<feature type="strand" evidence="11">
    <location>
        <begin position="250"/>
        <end position="258"/>
    </location>
</feature>
<feature type="turn" evidence="11">
    <location>
        <begin position="259"/>
        <end position="262"/>
    </location>
</feature>
<feature type="strand" evidence="11">
    <location>
        <begin position="263"/>
        <end position="272"/>
    </location>
</feature>
<feature type="turn" evidence="11">
    <location>
        <begin position="273"/>
        <end position="276"/>
    </location>
</feature>
<feature type="strand" evidence="11">
    <location>
        <begin position="277"/>
        <end position="281"/>
    </location>
</feature>
<feature type="strand" evidence="11">
    <location>
        <begin position="290"/>
        <end position="293"/>
    </location>
</feature>
<feature type="strand" evidence="11">
    <location>
        <begin position="295"/>
        <end position="299"/>
    </location>
</feature>
<feature type="strand" evidence="11">
    <location>
        <begin position="302"/>
        <end position="306"/>
    </location>
</feature>
<feature type="strand" evidence="11">
    <location>
        <begin position="309"/>
        <end position="311"/>
    </location>
</feature>
<feature type="strand" evidence="11">
    <location>
        <begin position="323"/>
        <end position="325"/>
    </location>
</feature>
<feature type="strand" evidence="11">
    <location>
        <begin position="329"/>
        <end position="335"/>
    </location>
</feature>
<feature type="helix" evidence="11">
    <location>
        <begin position="338"/>
        <end position="348"/>
    </location>
</feature>
<feature type="helix" evidence="11">
    <location>
        <begin position="358"/>
        <end position="367"/>
    </location>
</feature>
<reference key="1">
    <citation type="journal article" date="2003" name="FEBS Lett.">
        <title>A novel testis-specific RAG2-like protein, Peas: its expression in pachytene spermatocyte cytoplasm and meiotic chromatin.</title>
        <authorList>
            <person name="Ohinata Y."/>
            <person name="Sutou S."/>
            <person name="Mitsui Y."/>
        </authorList>
    </citation>
    <scope>NUCLEOTIDE SEQUENCE [MRNA]</scope>
    <scope>FUNCTION</scope>
    <scope>SUBCELLULAR LOCATION</scope>
    <source>
        <tissue>Testis</tissue>
    </source>
</reference>
<reference key="2">
    <citation type="journal article" date="2004" name="Nat. Genet.">
        <title>Complete sequencing and characterization of 21,243 full-length human cDNAs.</title>
        <authorList>
            <person name="Ota T."/>
            <person name="Suzuki Y."/>
            <person name="Nishikawa T."/>
            <person name="Otsuki T."/>
            <person name="Sugiyama T."/>
            <person name="Irie R."/>
            <person name="Wakamatsu A."/>
            <person name="Hayashi K."/>
            <person name="Sato H."/>
            <person name="Nagai K."/>
            <person name="Kimura K."/>
            <person name="Makita H."/>
            <person name="Sekine M."/>
            <person name="Obayashi M."/>
            <person name="Nishi T."/>
            <person name="Shibahara T."/>
            <person name="Tanaka T."/>
            <person name="Ishii S."/>
            <person name="Yamamoto J."/>
            <person name="Saito K."/>
            <person name="Kawai Y."/>
            <person name="Isono Y."/>
            <person name="Nakamura Y."/>
            <person name="Nagahari K."/>
            <person name="Murakami K."/>
            <person name="Yasuda T."/>
            <person name="Iwayanagi T."/>
            <person name="Wagatsuma M."/>
            <person name="Shiratori A."/>
            <person name="Sudo H."/>
            <person name="Hosoiri T."/>
            <person name="Kaku Y."/>
            <person name="Kodaira H."/>
            <person name="Kondo H."/>
            <person name="Sugawara M."/>
            <person name="Takahashi M."/>
            <person name="Kanda K."/>
            <person name="Yokoi T."/>
            <person name="Furuya T."/>
            <person name="Kikkawa E."/>
            <person name="Omura Y."/>
            <person name="Abe K."/>
            <person name="Kamihara K."/>
            <person name="Katsuta N."/>
            <person name="Sato K."/>
            <person name="Tanikawa M."/>
            <person name="Yamazaki M."/>
            <person name="Ninomiya K."/>
            <person name="Ishibashi T."/>
            <person name="Yamashita H."/>
            <person name="Murakawa K."/>
            <person name="Fujimori K."/>
            <person name="Tanai H."/>
            <person name="Kimata M."/>
            <person name="Watanabe M."/>
            <person name="Hiraoka S."/>
            <person name="Chiba Y."/>
            <person name="Ishida S."/>
            <person name="Ono Y."/>
            <person name="Takiguchi S."/>
            <person name="Watanabe S."/>
            <person name="Yosida M."/>
            <person name="Hotuta T."/>
            <person name="Kusano J."/>
            <person name="Kanehori K."/>
            <person name="Takahashi-Fujii A."/>
            <person name="Hara H."/>
            <person name="Tanase T.-O."/>
            <person name="Nomura Y."/>
            <person name="Togiya S."/>
            <person name="Komai F."/>
            <person name="Hara R."/>
            <person name="Takeuchi K."/>
            <person name="Arita M."/>
            <person name="Imose N."/>
            <person name="Musashino K."/>
            <person name="Yuuki H."/>
            <person name="Oshima A."/>
            <person name="Sasaki N."/>
            <person name="Aotsuka S."/>
            <person name="Yoshikawa Y."/>
            <person name="Matsunawa H."/>
            <person name="Ichihara T."/>
            <person name="Shiohata N."/>
            <person name="Sano S."/>
            <person name="Moriya S."/>
            <person name="Momiyama H."/>
            <person name="Satoh N."/>
            <person name="Takami S."/>
            <person name="Terashima Y."/>
            <person name="Suzuki O."/>
            <person name="Nakagawa S."/>
            <person name="Senoh A."/>
            <person name="Mizoguchi H."/>
            <person name="Goto Y."/>
            <person name="Shimizu F."/>
            <person name="Wakebe H."/>
            <person name="Hishigaki H."/>
            <person name="Watanabe T."/>
            <person name="Sugiyama A."/>
            <person name="Takemoto M."/>
            <person name="Kawakami B."/>
            <person name="Yamazaki M."/>
            <person name="Watanabe K."/>
            <person name="Kumagai A."/>
            <person name="Itakura S."/>
            <person name="Fukuzumi Y."/>
            <person name="Fujimori Y."/>
            <person name="Komiyama M."/>
            <person name="Tashiro H."/>
            <person name="Tanigami A."/>
            <person name="Fujiwara T."/>
            <person name="Ono T."/>
            <person name="Yamada K."/>
            <person name="Fujii Y."/>
            <person name="Ozaki K."/>
            <person name="Hirao M."/>
            <person name="Ohmori Y."/>
            <person name="Kawabata A."/>
            <person name="Hikiji T."/>
            <person name="Kobatake N."/>
            <person name="Inagaki H."/>
            <person name="Ikema Y."/>
            <person name="Okamoto S."/>
            <person name="Okitani R."/>
            <person name="Kawakami T."/>
            <person name="Noguchi S."/>
            <person name="Itoh T."/>
            <person name="Shigeta K."/>
            <person name="Senba T."/>
            <person name="Matsumura K."/>
            <person name="Nakajima Y."/>
            <person name="Mizuno T."/>
            <person name="Morinaga M."/>
            <person name="Sasaki M."/>
            <person name="Togashi T."/>
            <person name="Oyama M."/>
            <person name="Hata H."/>
            <person name="Watanabe M."/>
            <person name="Komatsu T."/>
            <person name="Mizushima-Sugano J."/>
            <person name="Satoh T."/>
            <person name="Shirai Y."/>
            <person name="Takahashi Y."/>
            <person name="Nakagawa K."/>
            <person name="Okumura K."/>
            <person name="Nagase T."/>
            <person name="Nomura N."/>
            <person name="Kikuchi H."/>
            <person name="Masuho Y."/>
            <person name="Yamashita R."/>
            <person name="Nakai K."/>
            <person name="Yada T."/>
            <person name="Nakamura Y."/>
            <person name="Ohara O."/>
            <person name="Isogai T."/>
            <person name="Sugano S."/>
        </authorList>
    </citation>
    <scope>NUCLEOTIDE SEQUENCE [LARGE SCALE MRNA]</scope>
    <source>
        <tissue>Umbilical cord blood</tissue>
    </source>
</reference>
<reference key="3">
    <citation type="journal article" date="2003" name="Nature">
        <title>The DNA sequence and analysis of human chromosome 6.</title>
        <authorList>
            <person name="Mungall A.J."/>
            <person name="Palmer S.A."/>
            <person name="Sims S.K."/>
            <person name="Edwards C.A."/>
            <person name="Ashurst J.L."/>
            <person name="Wilming L."/>
            <person name="Jones M.C."/>
            <person name="Horton R."/>
            <person name="Hunt S.E."/>
            <person name="Scott C.E."/>
            <person name="Gilbert J.G.R."/>
            <person name="Clamp M.E."/>
            <person name="Bethel G."/>
            <person name="Milne S."/>
            <person name="Ainscough R."/>
            <person name="Almeida J.P."/>
            <person name="Ambrose K.D."/>
            <person name="Andrews T.D."/>
            <person name="Ashwell R.I.S."/>
            <person name="Babbage A.K."/>
            <person name="Bagguley C.L."/>
            <person name="Bailey J."/>
            <person name="Banerjee R."/>
            <person name="Barker D.J."/>
            <person name="Barlow K.F."/>
            <person name="Bates K."/>
            <person name="Beare D.M."/>
            <person name="Beasley H."/>
            <person name="Beasley O."/>
            <person name="Bird C.P."/>
            <person name="Blakey S.E."/>
            <person name="Bray-Allen S."/>
            <person name="Brook J."/>
            <person name="Brown A.J."/>
            <person name="Brown J.Y."/>
            <person name="Burford D.C."/>
            <person name="Burrill W."/>
            <person name="Burton J."/>
            <person name="Carder C."/>
            <person name="Carter N.P."/>
            <person name="Chapman J.C."/>
            <person name="Clark S.Y."/>
            <person name="Clark G."/>
            <person name="Clee C.M."/>
            <person name="Clegg S."/>
            <person name="Cobley V."/>
            <person name="Collier R.E."/>
            <person name="Collins J.E."/>
            <person name="Colman L.K."/>
            <person name="Corby N.R."/>
            <person name="Coville G.J."/>
            <person name="Culley K.M."/>
            <person name="Dhami P."/>
            <person name="Davies J."/>
            <person name="Dunn M."/>
            <person name="Earthrowl M.E."/>
            <person name="Ellington A.E."/>
            <person name="Evans K.A."/>
            <person name="Faulkner L."/>
            <person name="Francis M.D."/>
            <person name="Frankish A."/>
            <person name="Frankland J."/>
            <person name="French L."/>
            <person name="Garner P."/>
            <person name="Garnett J."/>
            <person name="Ghori M.J."/>
            <person name="Gilby L.M."/>
            <person name="Gillson C.J."/>
            <person name="Glithero R.J."/>
            <person name="Grafham D.V."/>
            <person name="Grant M."/>
            <person name="Gribble S."/>
            <person name="Griffiths C."/>
            <person name="Griffiths M.N.D."/>
            <person name="Hall R."/>
            <person name="Halls K.S."/>
            <person name="Hammond S."/>
            <person name="Harley J.L."/>
            <person name="Hart E.A."/>
            <person name="Heath P.D."/>
            <person name="Heathcott R."/>
            <person name="Holmes S.J."/>
            <person name="Howden P.J."/>
            <person name="Howe K.L."/>
            <person name="Howell G.R."/>
            <person name="Huckle E."/>
            <person name="Humphray S.J."/>
            <person name="Humphries M.D."/>
            <person name="Hunt A.R."/>
            <person name="Johnson C.M."/>
            <person name="Joy A.A."/>
            <person name="Kay M."/>
            <person name="Keenan S.J."/>
            <person name="Kimberley A.M."/>
            <person name="King A."/>
            <person name="Laird G.K."/>
            <person name="Langford C."/>
            <person name="Lawlor S."/>
            <person name="Leongamornlert D.A."/>
            <person name="Leversha M."/>
            <person name="Lloyd C.R."/>
            <person name="Lloyd D.M."/>
            <person name="Loveland J.E."/>
            <person name="Lovell J."/>
            <person name="Martin S."/>
            <person name="Mashreghi-Mohammadi M."/>
            <person name="Maslen G.L."/>
            <person name="Matthews L."/>
            <person name="McCann O.T."/>
            <person name="McLaren S.J."/>
            <person name="McLay K."/>
            <person name="McMurray A."/>
            <person name="Moore M.J.F."/>
            <person name="Mullikin J.C."/>
            <person name="Niblett D."/>
            <person name="Nickerson T."/>
            <person name="Novik K.L."/>
            <person name="Oliver K."/>
            <person name="Overton-Larty E.K."/>
            <person name="Parker A."/>
            <person name="Patel R."/>
            <person name="Pearce A.V."/>
            <person name="Peck A.I."/>
            <person name="Phillimore B.J.C.T."/>
            <person name="Phillips S."/>
            <person name="Plumb R.W."/>
            <person name="Porter K.M."/>
            <person name="Ramsey Y."/>
            <person name="Ranby S.A."/>
            <person name="Rice C.M."/>
            <person name="Ross M.T."/>
            <person name="Searle S.M."/>
            <person name="Sehra H.K."/>
            <person name="Sheridan E."/>
            <person name="Skuce C.D."/>
            <person name="Smith S."/>
            <person name="Smith M."/>
            <person name="Spraggon L."/>
            <person name="Squares S.L."/>
            <person name="Steward C.A."/>
            <person name="Sycamore N."/>
            <person name="Tamlyn-Hall G."/>
            <person name="Tester J."/>
            <person name="Theaker A.J."/>
            <person name="Thomas D.W."/>
            <person name="Thorpe A."/>
            <person name="Tracey A."/>
            <person name="Tromans A."/>
            <person name="Tubby B."/>
            <person name="Wall M."/>
            <person name="Wallis J.M."/>
            <person name="West A.P."/>
            <person name="White S.S."/>
            <person name="Whitehead S.L."/>
            <person name="Whittaker H."/>
            <person name="Wild A."/>
            <person name="Willey D.J."/>
            <person name="Wilmer T.E."/>
            <person name="Wood J.M."/>
            <person name="Wray P.W."/>
            <person name="Wyatt J.C."/>
            <person name="Young L."/>
            <person name="Younger R.M."/>
            <person name="Bentley D.R."/>
            <person name="Coulson A."/>
            <person name="Durbin R.M."/>
            <person name="Hubbard T."/>
            <person name="Sulston J.E."/>
            <person name="Dunham I."/>
            <person name="Rogers J."/>
            <person name="Beck S."/>
        </authorList>
    </citation>
    <scope>NUCLEOTIDE SEQUENCE [LARGE SCALE GENOMIC DNA]</scope>
</reference>
<reference key="4">
    <citation type="submission" date="2005-07" db="EMBL/GenBank/DDBJ databases">
        <authorList>
            <person name="Mural R.J."/>
            <person name="Istrail S."/>
            <person name="Sutton G.G."/>
            <person name="Florea L."/>
            <person name="Halpern A.L."/>
            <person name="Mobarry C.M."/>
            <person name="Lippert R."/>
            <person name="Walenz B."/>
            <person name="Shatkay H."/>
            <person name="Dew I."/>
            <person name="Miller J.R."/>
            <person name="Flanigan M.J."/>
            <person name="Edwards N.J."/>
            <person name="Bolanos R."/>
            <person name="Fasulo D."/>
            <person name="Halldorsson B.V."/>
            <person name="Hannenhalli S."/>
            <person name="Turner R."/>
            <person name="Yooseph S."/>
            <person name="Lu F."/>
            <person name="Nusskern D.R."/>
            <person name="Shue B.C."/>
            <person name="Zheng X.H."/>
            <person name="Zhong F."/>
            <person name="Delcher A.L."/>
            <person name="Huson D.H."/>
            <person name="Kravitz S.A."/>
            <person name="Mouchard L."/>
            <person name="Reinert K."/>
            <person name="Remington K.A."/>
            <person name="Clark A.G."/>
            <person name="Waterman M.S."/>
            <person name="Eichler E.E."/>
            <person name="Adams M.D."/>
            <person name="Hunkapiller M.W."/>
            <person name="Myers E.W."/>
            <person name="Venter J.C."/>
        </authorList>
    </citation>
    <scope>NUCLEOTIDE SEQUENCE [LARGE SCALE GENOMIC DNA]</scope>
</reference>
<reference key="5">
    <citation type="journal article" date="2004" name="Genome Res.">
        <title>The status, quality, and expansion of the NIH full-length cDNA project: the Mammalian Gene Collection (MGC).</title>
        <authorList>
            <consortium name="The MGC Project Team"/>
        </authorList>
    </citation>
    <scope>NUCLEOTIDE SEQUENCE [LARGE SCALE MRNA]</scope>
    <source>
        <tissue>Eye</tissue>
        <tissue>Lung</tissue>
    </source>
</reference>
<reference key="6">
    <citation type="journal article" date="2015" name="Science">
        <title>SELENOPROTEINS. CRL2 aids elimination of truncated selenoproteins produced by failed UGA/Sec decoding.</title>
        <authorList>
            <person name="Lin H.C."/>
            <person name="Ho S.C."/>
            <person name="Chen Y.Y."/>
            <person name="Khoo K.H."/>
            <person name="Hsu P.H."/>
            <person name="Yen H.C."/>
        </authorList>
    </citation>
    <scope>FUNCTION</scope>
</reference>
<reference key="7">
    <citation type="journal article" date="2018" name="Cell">
        <title>The eukaryotic proteome is shaped by E3 ubiquitin ligases targeting C-terminal degrons.</title>
        <authorList>
            <person name="Koren I."/>
            <person name="Timms R.T."/>
            <person name="Kula T."/>
            <person name="Xu Q."/>
            <person name="Li M.Z."/>
            <person name="Elledge S.J."/>
        </authorList>
    </citation>
    <scope>FUNCTION</scope>
    <scope>PATHWAY</scope>
    <scope>IDENTIFICATION IN A CRL2 E3 UBIQUITIN-PROTEIN LIGASE COMPLEX</scope>
</reference>
<reference key="8">
    <citation type="journal article" date="2018" name="Mol. Cell">
        <title>C-terminal end-directed protein elimination by CRL2 ubiquitin ligases.</title>
        <authorList>
            <person name="Lin H.C."/>
            <person name="Yeh C.W."/>
            <person name="Chen Y.F."/>
            <person name="Lee T.T."/>
            <person name="Hsieh P.Y."/>
            <person name="Rusnac D.V."/>
            <person name="Lin S.Y."/>
            <person name="Elledge S.J."/>
            <person name="Zheng N."/>
            <person name="Yen H.S."/>
        </authorList>
    </citation>
    <scope>FUNCTION</scope>
    <scope>PATHWAY</scope>
    <scope>IDENTIFICATION IN A CRL2 E3 UBIQUITIN-PROTEIN LIGASE COMPLEX</scope>
</reference>
<reference key="9">
    <citation type="journal article" date="2023" name="Mol. Cell">
        <title>E3 ligase autoinhibition by C-degron mimicry maintains C-degron substrate fidelity.</title>
        <authorList>
            <person name="Scott D.C."/>
            <person name="King M.T."/>
            <person name="Baek K."/>
            <person name="Gee C.T."/>
            <person name="Kalathur R."/>
            <person name="Li J."/>
            <person name="Purser N."/>
            <person name="Nourse A."/>
            <person name="Chai S.C."/>
            <person name="Vaithiyalingam S."/>
            <person name="Chen T."/>
            <person name="Lee R.E."/>
            <person name="Elledge S.J."/>
            <person name="Kleiger G."/>
            <person name="Schulman B.A."/>
        </authorList>
    </citation>
    <scope>INTERACTION WITH ELOB AND ELOC</scope>
</reference>
<protein>
    <recommendedName>
        <fullName evidence="8">Kelch domain-containing protein 3</fullName>
    </recommendedName>
    <alternativeName>
        <fullName evidence="6">Testis intracellular mediator protein</fullName>
    </alternativeName>
</protein>
<evidence type="ECO:0000269" key="1">
    <source>
    </source>
</evidence>
<evidence type="ECO:0000269" key="2">
    <source>
    </source>
</evidence>
<evidence type="ECO:0000269" key="3">
    <source>
    </source>
</evidence>
<evidence type="ECO:0000269" key="4">
    <source>
    </source>
</evidence>
<evidence type="ECO:0000269" key="5">
    <source>
    </source>
</evidence>
<evidence type="ECO:0000303" key="6">
    <source>
    </source>
</evidence>
<evidence type="ECO:0000303" key="7">
    <source>
    </source>
</evidence>
<evidence type="ECO:0000305" key="8"/>
<evidence type="ECO:0000312" key="9">
    <source>
        <dbReference type="HGNC" id="HGNC:20704"/>
    </source>
</evidence>
<evidence type="ECO:0007829" key="10">
    <source>
        <dbReference type="PDB" id="9D1I"/>
    </source>
</evidence>
<evidence type="ECO:0007829" key="11">
    <source>
        <dbReference type="PDB" id="9D1Z"/>
    </source>
</evidence>
<comment type="function">
    <text evidence="1 2 3 4">Substrate-recognition component of a Cul2-RING (CRL2) E3 ubiquitin-protein ligase complex of the DesCEND (destruction via C-end degrons) pathway, which recognizes a C-degron located at the extreme C terminus of target proteins, leading to their ubiquitination and degradation (PubMed:29775578, PubMed:29779948). The C-degron recognized by the DesCEND pathway is usually a motif of less than ten residues and can be present in full-length proteins, truncated proteins or proteolytically cleaved forms (PubMed:29775578, PubMed:29779948). The CRL2(KLHDC3) complex specifically recognizes proteins with a glycine (Gly) at the C-terminus, leading to their ubiquitination and degradation: recognizes the C-terminal -Arg-(Xaa)n-Arg-Gly, -Arg-(Xaa)n-Lys-Gly, and -Arg-(Xaa)n-Gln-Gly degrons (PubMed:29775578, PubMed:29779948). The CRL2(KLHDC3) complex mediates ubiquitination and degradation of truncated SELENOV and SEPHS2 selenoproteins produced by failed UGA/Sec decoding, which end with a glycine (PubMed:26138980). May be involved in meiotic recombination process (PubMed:12606021).</text>
</comment>
<comment type="pathway">
    <text evidence="3 4">Protein modification; protein ubiquitination.</text>
</comment>
<comment type="subunit">
    <text evidence="3 4 5">Component of a CRL2(KLHDC3) complex, also named ECS(KLHDC3) complex, composed of CUL2, Elongin BC (ELOB and ELOC), RBX1 and substrate-specific adapter KLHDC3 (PubMed:29775578, PubMed:29779948). May form oligomers as a KLHDC3-ELOB-ELOC complex; this interaction is likely autoinhibitory for the E3 ligase complex (PubMed:36805027).</text>
</comment>
<comment type="interaction">
    <interactant intactId="EBI-1055396">
        <id>Q9BQ90</id>
    </interactant>
    <interactant intactId="EBI-456179">
        <id>Q13617</id>
        <label>CUL2</label>
    </interactant>
    <organismsDiffer>false</organismsDiffer>
    <experiments>11</experiments>
</comment>
<comment type="subcellular location">
    <subcellularLocation>
        <location evidence="1">Cytoplasm</location>
    </subcellularLocation>
</comment>
<proteinExistence type="evidence at protein level"/>
<name>KLDC3_HUMAN</name>